<protein>
    <recommendedName>
        <fullName evidence="1">Ribonuclease P protein component 1</fullName>
        <shortName evidence="1">RNase P component 1</shortName>
        <ecNumber evidence="1">3.1.26.5</ecNumber>
    </recommendedName>
    <alternativeName>
        <fullName evidence="1">Rpp29</fullName>
    </alternativeName>
</protein>
<proteinExistence type="inferred from homology"/>
<keyword id="KW-0963">Cytoplasm</keyword>
<keyword id="KW-0255">Endonuclease</keyword>
<keyword id="KW-0378">Hydrolase</keyword>
<keyword id="KW-0540">Nuclease</keyword>
<keyword id="KW-0819">tRNA processing</keyword>
<gene>
    <name evidence="1" type="primary">rnp1</name>
    <name type="ordered locus">Mbur_0009</name>
</gene>
<feature type="chain" id="PRO_1000046614" description="Ribonuclease P protein component 1">
    <location>
        <begin position="1"/>
        <end position="101"/>
    </location>
</feature>
<name>RNP1_METBU</name>
<evidence type="ECO:0000255" key="1">
    <source>
        <dbReference type="HAMAP-Rule" id="MF_00754"/>
    </source>
</evidence>
<dbReference type="EC" id="3.1.26.5" evidence="1"/>
<dbReference type="EMBL" id="CP000300">
    <property type="protein sequence ID" value="ABE51033.1"/>
    <property type="molecule type" value="Genomic_DNA"/>
</dbReference>
<dbReference type="RefSeq" id="WP_011498197.1">
    <property type="nucleotide sequence ID" value="NC_007955.1"/>
</dbReference>
<dbReference type="SMR" id="Q12ZU3"/>
<dbReference type="STRING" id="259564.Mbur_0009"/>
<dbReference type="GeneID" id="3996909"/>
<dbReference type="KEGG" id="mbu:Mbur_0009"/>
<dbReference type="HOGENOM" id="CLU_107020_2_0_2"/>
<dbReference type="OrthoDB" id="39019at2157"/>
<dbReference type="Proteomes" id="UP000001979">
    <property type="component" value="Chromosome"/>
</dbReference>
<dbReference type="GO" id="GO:0005737">
    <property type="term" value="C:cytoplasm"/>
    <property type="evidence" value="ECO:0007669"/>
    <property type="project" value="UniProtKB-SubCell"/>
</dbReference>
<dbReference type="GO" id="GO:0000172">
    <property type="term" value="C:ribonuclease MRP complex"/>
    <property type="evidence" value="ECO:0007669"/>
    <property type="project" value="InterPro"/>
</dbReference>
<dbReference type="GO" id="GO:0030677">
    <property type="term" value="C:ribonuclease P complex"/>
    <property type="evidence" value="ECO:0007669"/>
    <property type="project" value="UniProtKB-UniRule"/>
</dbReference>
<dbReference type="GO" id="GO:0004526">
    <property type="term" value="F:ribonuclease P activity"/>
    <property type="evidence" value="ECO:0007669"/>
    <property type="project" value="UniProtKB-UniRule"/>
</dbReference>
<dbReference type="GO" id="GO:0033204">
    <property type="term" value="F:ribonuclease P RNA binding"/>
    <property type="evidence" value="ECO:0007669"/>
    <property type="project" value="InterPro"/>
</dbReference>
<dbReference type="GO" id="GO:0006364">
    <property type="term" value="P:rRNA processing"/>
    <property type="evidence" value="ECO:0007669"/>
    <property type="project" value="TreeGrafter"/>
</dbReference>
<dbReference type="GO" id="GO:0001682">
    <property type="term" value="P:tRNA 5'-leader removal"/>
    <property type="evidence" value="ECO:0007669"/>
    <property type="project" value="UniProtKB-UniRule"/>
</dbReference>
<dbReference type="Gene3D" id="2.30.30.210">
    <property type="entry name" value="Ribonuclease P/MRP, subunit p29"/>
    <property type="match status" value="1"/>
</dbReference>
<dbReference type="HAMAP" id="MF_00754">
    <property type="entry name" value="RNase_P_1"/>
    <property type="match status" value="1"/>
</dbReference>
<dbReference type="InterPro" id="IPR016848">
    <property type="entry name" value="RNase_P/MRP_Rpp29-subunit"/>
</dbReference>
<dbReference type="InterPro" id="IPR036980">
    <property type="entry name" value="RNase_P/MRP_Rpp29_sf"/>
</dbReference>
<dbReference type="InterPro" id="IPR023538">
    <property type="entry name" value="RNP1"/>
</dbReference>
<dbReference type="InterPro" id="IPR023534">
    <property type="entry name" value="Rof/RNase_P-like"/>
</dbReference>
<dbReference type="InterPro" id="IPR002730">
    <property type="entry name" value="Rpp29/RNP1"/>
</dbReference>
<dbReference type="NCBIfam" id="NF046110">
    <property type="entry name" value="RNaseP1Mthb"/>
    <property type="match status" value="1"/>
</dbReference>
<dbReference type="PANTHER" id="PTHR13348:SF0">
    <property type="entry name" value="RIBONUCLEASE P PROTEIN SUBUNIT P29"/>
    <property type="match status" value="1"/>
</dbReference>
<dbReference type="PANTHER" id="PTHR13348">
    <property type="entry name" value="RIBONUCLEASE P SUBUNIT P29"/>
    <property type="match status" value="1"/>
</dbReference>
<dbReference type="Pfam" id="PF01868">
    <property type="entry name" value="RNase_P-MRP_p29"/>
    <property type="match status" value="1"/>
</dbReference>
<dbReference type="SMART" id="SM00538">
    <property type="entry name" value="POP4"/>
    <property type="match status" value="1"/>
</dbReference>
<dbReference type="SUPFAM" id="SSF101744">
    <property type="entry name" value="Rof/RNase P subunit-like"/>
    <property type="match status" value="1"/>
</dbReference>
<organism>
    <name type="scientific">Methanococcoides burtonii (strain DSM 6242 / NBRC 107633 / OCM 468 / ACE-M)</name>
    <dbReference type="NCBI Taxonomy" id="259564"/>
    <lineage>
        <taxon>Archaea</taxon>
        <taxon>Methanobacteriati</taxon>
        <taxon>Methanobacteriota</taxon>
        <taxon>Stenosarchaea group</taxon>
        <taxon>Methanomicrobia</taxon>
        <taxon>Methanosarcinales</taxon>
        <taxon>Methanosarcinaceae</taxon>
        <taxon>Methanococcoides</taxon>
    </lineage>
</organism>
<comment type="function">
    <text evidence="1">Part of ribonuclease P, a protein complex that generates mature tRNA molecules by cleaving their 5'-ends.</text>
</comment>
<comment type="catalytic activity">
    <reaction evidence="1">
        <text>Endonucleolytic cleavage of RNA, removing 5'-extranucleotides from tRNA precursor.</text>
        <dbReference type="EC" id="3.1.26.5"/>
    </reaction>
</comment>
<comment type="subunit">
    <text evidence="1">Consists of a catalytic RNA component and at least 4-5 protein subunits.</text>
</comment>
<comment type="subcellular location">
    <subcellularLocation>
        <location evidence="1">Cytoplasm</location>
    </subcellularLocation>
</comment>
<comment type="similarity">
    <text evidence="1">Belongs to the eukaryotic/archaeal RNase P protein component 1 family.</text>
</comment>
<reference key="1">
    <citation type="journal article" date="2009" name="ISME J.">
        <title>The genome sequence of the psychrophilic archaeon, Methanococcoides burtonii: the role of genome evolution in cold adaptation.</title>
        <authorList>
            <person name="Allen M.A."/>
            <person name="Lauro F.M."/>
            <person name="Williams T.J."/>
            <person name="Burg D."/>
            <person name="Siddiqui K.S."/>
            <person name="De Francisci D."/>
            <person name="Chong K.W."/>
            <person name="Pilak O."/>
            <person name="Chew H.H."/>
            <person name="De Maere M.Z."/>
            <person name="Ting L."/>
            <person name="Katrib M."/>
            <person name="Ng C."/>
            <person name="Sowers K.R."/>
            <person name="Galperin M.Y."/>
            <person name="Anderson I.J."/>
            <person name="Ivanova N."/>
            <person name="Dalin E."/>
            <person name="Martinez M."/>
            <person name="Lapidus A."/>
            <person name="Hauser L."/>
            <person name="Land M."/>
            <person name="Thomas T."/>
            <person name="Cavicchioli R."/>
        </authorList>
    </citation>
    <scope>NUCLEOTIDE SEQUENCE [LARGE SCALE GENOMIC DNA]</scope>
    <source>
        <strain>DSM 6242 / NBRC 107633 / OCM 468 / ACE-M</strain>
    </source>
</reference>
<sequence>MEALPSNLIFHELIGLYAEVFESTNPKLINICGRVIDETRNMLIIETEDTHEKMVPKNGTTFVFHLPSSSADHDQRVKIFGTLLLSQPENRVKNIRKIRMR</sequence>
<accession>Q12ZU3</accession>